<protein>
    <recommendedName>
        <fullName evidence="2">D-alanine--D-alanine ligase</fullName>
        <ecNumber evidence="2">6.3.2.4</ecNumber>
    </recommendedName>
    <alternativeName>
        <fullName evidence="2">D-Ala-D-Ala ligase</fullName>
    </alternativeName>
    <alternativeName>
        <fullName evidence="2">D-alanylalanine synthetase</fullName>
    </alternativeName>
</protein>
<organism>
    <name type="scientific">Pseudoalteromonas atlantica (strain T6c / ATCC BAA-1087)</name>
    <dbReference type="NCBI Taxonomy" id="3042615"/>
    <lineage>
        <taxon>Bacteria</taxon>
        <taxon>Pseudomonadati</taxon>
        <taxon>Pseudomonadota</taxon>
        <taxon>Gammaproteobacteria</taxon>
        <taxon>Alteromonadales</taxon>
        <taxon>Alteromonadaceae</taxon>
        <taxon>Paraglaciecola</taxon>
    </lineage>
</organism>
<feature type="chain" id="PRO_0000341153" description="D-alanine--D-alanine ligase">
    <location>
        <begin position="1"/>
        <end position="318"/>
    </location>
</feature>
<feature type="domain" description="ATP-grasp" evidence="2">
    <location>
        <begin position="116"/>
        <end position="315"/>
    </location>
</feature>
<feature type="binding site" evidence="2">
    <location>
        <begin position="146"/>
        <end position="201"/>
    </location>
    <ligand>
        <name>ATP</name>
        <dbReference type="ChEBI" id="CHEBI:30616"/>
    </ligand>
</feature>
<feature type="binding site" evidence="2">
    <location>
        <position position="269"/>
    </location>
    <ligand>
        <name>Mg(2+)</name>
        <dbReference type="ChEBI" id="CHEBI:18420"/>
        <label>1</label>
    </ligand>
</feature>
<feature type="binding site" evidence="2">
    <location>
        <position position="282"/>
    </location>
    <ligand>
        <name>Mg(2+)</name>
        <dbReference type="ChEBI" id="CHEBI:18420"/>
        <label>1</label>
    </ligand>
</feature>
<feature type="binding site" evidence="2">
    <location>
        <position position="282"/>
    </location>
    <ligand>
        <name>Mg(2+)</name>
        <dbReference type="ChEBI" id="CHEBI:18420"/>
        <label>2</label>
    </ligand>
</feature>
<feature type="binding site" evidence="2">
    <location>
        <position position="284"/>
    </location>
    <ligand>
        <name>Mg(2+)</name>
        <dbReference type="ChEBI" id="CHEBI:18420"/>
        <label>2</label>
    </ligand>
</feature>
<proteinExistence type="inferred from homology"/>
<dbReference type="EC" id="6.3.2.4" evidence="2"/>
<dbReference type="EMBL" id="CP000388">
    <property type="protein sequence ID" value="ABG42019.1"/>
    <property type="molecule type" value="Genomic_DNA"/>
</dbReference>
<dbReference type="RefSeq" id="WP_011576247.1">
    <property type="nucleotide sequence ID" value="NC_008228.1"/>
</dbReference>
<dbReference type="SMR" id="Q15Q19"/>
<dbReference type="STRING" id="342610.Patl_3517"/>
<dbReference type="KEGG" id="pat:Patl_3517"/>
<dbReference type="eggNOG" id="COG1181">
    <property type="taxonomic scope" value="Bacteria"/>
</dbReference>
<dbReference type="HOGENOM" id="CLU_039268_1_2_6"/>
<dbReference type="OrthoDB" id="9813261at2"/>
<dbReference type="UniPathway" id="UPA00219"/>
<dbReference type="Proteomes" id="UP000001981">
    <property type="component" value="Chromosome"/>
</dbReference>
<dbReference type="GO" id="GO:0005829">
    <property type="term" value="C:cytosol"/>
    <property type="evidence" value="ECO:0007669"/>
    <property type="project" value="TreeGrafter"/>
</dbReference>
<dbReference type="GO" id="GO:0005524">
    <property type="term" value="F:ATP binding"/>
    <property type="evidence" value="ECO:0007669"/>
    <property type="project" value="UniProtKB-KW"/>
</dbReference>
<dbReference type="GO" id="GO:0008716">
    <property type="term" value="F:D-alanine-D-alanine ligase activity"/>
    <property type="evidence" value="ECO:0007669"/>
    <property type="project" value="UniProtKB-UniRule"/>
</dbReference>
<dbReference type="GO" id="GO:0046872">
    <property type="term" value="F:metal ion binding"/>
    <property type="evidence" value="ECO:0007669"/>
    <property type="project" value="UniProtKB-KW"/>
</dbReference>
<dbReference type="GO" id="GO:0071555">
    <property type="term" value="P:cell wall organization"/>
    <property type="evidence" value="ECO:0007669"/>
    <property type="project" value="UniProtKB-KW"/>
</dbReference>
<dbReference type="GO" id="GO:0009252">
    <property type="term" value="P:peptidoglycan biosynthetic process"/>
    <property type="evidence" value="ECO:0007669"/>
    <property type="project" value="UniProtKB-UniRule"/>
</dbReference>
<dbReference type="GO" id="GO:0008360">
    <property type="term" value="P:regulation of cell shape"/>
    <property type="evidence" value="ECO:0007669"/>
    <property type="project" value="UniProtKB-KW"/>
</dbReference>
<dbReference type="FunFam" id="3.30.470.20:FF:000008">
    <property type="entry name" value="D-alanine--D-alanine ligase"/>
    <property type="match status" value="1"/>
</dbReference>
<dbReference type="FunFam" id="3.40.50.20:FF:000013">
    <property type="entry name" value="D-alanine--D-alanine ligase"/>
    <property type="match status" value="1"/>
</dbReference>
<dbReference type="Gene3D" id="3.40.50.20">
    <property type="match status" value="1"/>
</dbReference>
<dbReference type="Gene3D" id="3.30.1490.20">
    <property type="entry name" value="ATP-grasp fold, A domain"/>
    <property type="match status" value="1"/>
</dbReference>
<dbReference type="Gene3D" id="3.30.470.20">
    <property type="entry name" value="ATP-grasp fold, B domain"/>
    <property type="match status" value="1"/>
</dbReference>
<dbReference type="HAMAP" id="MF_00047">
    <property type="entry name" value="Dala_Dala_lig"/>
    <property type="match status" value="1"/>
</dbReference>
<dbReference type="InterPro" id="IPR011761">
    <property type="entry name" value="ATP-grasp"/>
</dbReference>
<dbReference type="InterPro" id="IPR013815">
    <property type="entry name" value="ATP_grasp_subdomain_1"/>
</dbReference>
<dbReference type="InterPro" id="IPR000291">
    <property type="entry name" value="D-Ala_lig_Van_CS"/>
</dbReference>
<dbReference type="InterPro" id="IPR005905">
    <property type="entry name" value="D_ala_D_ala"/>
</dbReference>
<dbReference type="InterPro" id="IPR011095">
    <property type="entry name" value="Dala_Dala_lig_C"/>
</dbReference>
<dbReference type="InterPro" id="IPR011127">
    <property type="entry name" value="Dala_Dala_lig_N"/>
</dbReference>
<dbReference type="InterPro" id="IPR016185">
    <property type="entry name" value="PreATP-grasp_dom_sf"/>
</dbReference>
<dbReference type="NCBIfam" id="TIGR01205">
    <property type="entry name" value="D_ala_D_alaTIGR"/>
    <property type="match status" value="1"/>
</dbReference>
<dbReference type="NCBIfam" id="NF002378">
    <property type="entry name" value="PRK01372.1"/>
    <property type="match status" value="1"/>
</dbReference>
<dbReference type="PANTHER" id="PTHR23132">
    <property type="entry name" value="D-ALANINE--D-ALANINE LIGASE"/>
    <property type="match status" value="1"/>
</dbReference>
<dbReference type="PANTHER" id="PTHR23132:SF23">
    <property type="entry name" value="D-ALANINE--D-ALANINE LIGASE B"/>
    <property type="match status" value="1"/>
</dbReference>
<dbReference type="Pfam" id="PF07478">
    <property type="entry name" value="Dala_Dala_lig_C"/>
    <property type="match status" value="1"/>
</dbReference>
<dbReference type="Pfam" id="PF01820">
    <property type="entry name" value="Dala_Dala_lig_N"/>
    <property type="match status" value="1"/>
</dbReference>
<dbReference type="PIRSF" id="PIRSF039102">
    <property type="entry name" value="Ddl/VanB"/>
    <property type="match status" value="1"/>
</dbReference>
<dbReference type="SUPFAM" id="SSF56059">
    <property type="entry name" value="Glutathione synthetase ATP-binding domain-like"/>
    <property type="match status" value="1"/>
</dbReference>
<dbReference type="SUPFAM" id="SSF52440">
    <property type="entry name" value="PreATP-grasp domain"/>
    <property type="match status" value="1"/>
</dbReference>
<dbReference type="PROSITE" id="PS50975">
    <property type="entry name" value="ATP_GRASP"/>
    <property type="match status" value="1"/>
</dbReference>
<dbReference type="PROSITE" id="PS00843">
    <property type="entry name" value="DALA_DALA_LIGASE_1"/>
    <property type="match status" value="1"/>
</dbReference>
<dbReference type="PROSITE" id="PS00844">
    <property type="entry name" value="DALA_DALA_LIGASE_2"/>
    <property type="match status" value="1"/>
</dbReference>
<name>DDL_PSEA6</name>
<gene>
    <name evidence="2" type="primary">ddl</name>
    <name type="ordered locus">Patl_3517</name>
</gene>
<sequence length="318" mass="34145">MTLANATHTSAIDIARFGKVAVMFGGRSAEREVSLRSGQAVLSALISAGVNAHGFDPAESELHQLVEQKFDRVLIMLHGRGGEDGSLQGALQQMNMPYTGTGVLGSALCMDKIRSKQVWQSLGLPTANYEIADKRDFNAANCSDIMSRLGDLVMVKPAQEGSSIGMAKVSNAQQLAAAIQQAFEYDDKVLLEQFIQGSEYTVSLLNGEAMPSISMSTPRDFYDYEAKYQSNTTEYFCPSGLPAEQEGLLARLALDAFDAVAGSGWGRVDFMQDMLGQFYLLEANTVPGMTEKSLVPLAAKQAGLSFEQLSLAVLATAG</sequence>
<reference key="1">
    <citation type="submission" date="2006-06" db="EMBL/GenBank/DDBJ databases">
        <title>Complete sequence of Pseudoalteromonas atlantica T6c.</title>
        <authorList>
            <consortium name="US DOE Joint Genome Institute"/>
            <person name="Copeland A."/>
            <person name="Lucas S."/>
            <person name="Lapidus A."/>
            <person name="Barry K."/>
            <person name="Detter J.C."/>
            <person name="Glavina del Rio T."/>
            <person name="Hammon N."/>
            <person name="Israni S."/>
            <person name="Dalin E."/>
            <person name="Tice H."/>
            <person name="Pitluck S."/>
            <person name="Saunders E."/>
            <person name="Brettin T."/>
            <person name="Bruce D."/>
            <person name="Han C."/>
            <person name="Tapia R."/>
            <person name="Gilna P."/>
            <person name="Schmutz J."/>
            <person name="Larimer F."/>
            <person name="Land M."/>
            <person name="Hauser L."/>
            <person name="Kyrpides N."/>
            <person name="Kim E."/>
            <person name="Karls A.C."/>
            <person name="Bartlett D."/>
            <person name="Higgins B.P."/>
            <person name="Richardson P."/>
        </authorList>
    </citation>
    <scope>NUCLEOTIDE SEQUENCE [LARGE SCALE GENOMIC DNA]</scope>
    <source>
        <strain>T6c / ATCC BAA-1087</strain>
    </source>
</reference>
<keyword id="KW-0067">ATP-binding</keyword>
<keyword id="KW-0133">Cell shape</keyword>
<keyword id="KW-0961">Cell wall biogenesis/degradation</keyword>
<keyword id="KW-0963">Cytoplasm</keyword>
<keyword id="KW-0436">Ligase</keyword>
<keyword id="KW-0460">Magnesium</keyword>
<keyword id="KW-0464">Manganese</keyword>
<keyword id="KW-0479">Metal-binding</keyword>
<keyword id="KW-0547">Nucleotide-binding</keyword>
<keyword id="KW-0573">Peptidoglycan synthesis</keyword>
<accession>Q15Q19</accession>
<comment type="function">
    <text evidence="2">Cell wall formation.</text>
</comment>
<comment type="catalytic activity">
    <reaction evidence="2">
        <text>2 D-alanine + ATP = D-alanyl-D-alanine + ADP + phosphate + H(+)</text>
        <dbReference type="Rhea" id="RHEA:11224"/>
        <dbReference type="ChEBI" id="CHEBI:15378"/>
        <dbReference type="ChEBI" id="CHEBI:30616"/>
        <dbReference type="ChEBI" id="CHEBI:43474"/>
        <dbReference type="ChEBI" id="CHEBI:57416"/>
        <dbReference type="ChEBI" id="CHEBI:57822"/>
        <dbReference type="ChEBI" id="CHEBI:456216"/>
        <dbReference type="EC" id="6.3.2.4"/>
    </reaction>
</comment>
<comment type="cofactor">
    <cofactor evidence="1">
        <name>Mg(2+)</name>
        <dbReference type="ChEBI" id="CHEBI:18420"/>
    </cofactor>
    <cofactor evidence="1">
        <name>Mn(2+)</name>
        <dbReference type="ChEBI" id="CHEBI:29035"/>
    </cofactor>
    <text evidence="1">Binds 2 magnesium or manganese ions per subunit.</text>
</comment>
<comment type="pathway">
    <text evidence="2">Cell wall biogenesis; peptidoglycan biosynthesis.</text>
</comment>
<comment type="subcellular location">
    <subcellularLocation>
        <location evidence="2">Cytoplasm</location>
    </subcellularLocation>
</comment>
<comment type="similarity">
    <text evidence="2">Belongs to the D-alanine--D-alanine ligase family.</text>
</comment>
<evidence type="ECO:0000250" key="1"/>
<evidence type="ECO:0000255" key="2">
    <source>
        <dbReference type="HAMAP-Rule" id="MF_00047"/>
    </source>
</evidence>